<organism>
    <name type="scientific">Azospirillum brasilense</name>
    <dbReference type="NCBI Taxonomy" id="192"/>
    <lineage>
        <taxon>Bacteria</taxon>
        <taxon>Pseudomonadati</taxon>
        <taxon>Pseudomonadota</taxon>
        <taxon>Alphaproteobacteria</taxon>
        <taxon>Rhodospirillales</taxon>
        <taxon>Azospirillaceae</taxon>
        <taxon>Azospirillum</taxon>
    </lineage>
</organism>
<reference key="1">
    <citation type="submission" date="2002-04" db="EMBL/GenBank/DDBJ databases">
        <title>Cloning and sequencing of several ORFs from Azospirillum brasilense.</title>
        <authorList>
            <person name="Chen S.F."/>
            <person name="Sun W.G."/>
            <person name="Li J.L."/>
        </authorList>
    </citation>
    <scope>NUCLEOTIDE SEQUENCE [GENOMIC DNA]</scope>
</reference>
<gene>
    <name evidence="1" type="primary">lgt</name>
</gene>
<sequence>MLAIAFPGIDPVAFELGPIVIRWYALAYLAGFVLGWRYCLALARSTPGRPSAEDYDDFLTWAVVGVILGGRIGYVLFYNLPFYLQNPLDALMVWHGGMSFHGGLIGVLGAILLFCWKRGLSPLAFGDLIAAAAPIGLFFGRIANFINGELYGRPAPDVSWAVVFPRDPLQVPRHPSQLYESFLEGAVLFVLLAILVRMPAVRGRAGMTAGIFFIGYGLSRIIAEFFREPDAQLGFLYAGATMGQLLSVPMVLFGVWLVAQARRRPAAI</sequence>
<dbReference type="EC" id="2.5.1.145" evidence="1"/>
<dbReference type="EMBL" id="AF510422">
    <property type="protein sequence ID" value="AAM53572.1"/>
    <property type="molecule type" value="Genomic_DNA"/>
</dbReference>
<dbReference type="SMR" id="Q8KSV0"/>
<dbReference type="UniPathway" id="UPA00664"/>
<dbReference type="GO" id="GO:0005886">
    <property type="term" value="C:plasma membrane"/>
    <property type="evidence" value="ECO:0007669"/>
    <property type="project" value="UniProtKB-SubCell"/>
</dbReference>
<dbReference type="GO" id="GO:0008961">
    <property type="term" value="F:phosphatidylglycerol-prolipoprotein diacylglyceryl transferase activity"/>
    <property type="evidence" value="ECO:0007669"/>
    <property type="project" value="UniProtKB-UniRule"/>
</dbReference>
<dbReference type="GO" id="GO:0042158">
    <property type="term" value="P:lipoprotein biosynthetic process"/>
    <property type="evidence" value="ECO:0007669"/>
    <property type="project" value="UniProtKB-UniRule"/>
</dbReference>
<dbReference type="HAMAP" id="MF_01147">
    <property type="entry name" value="Lgt"/>
    <property type="match status" value="1"/>
</dbReference>
<dbReference type="InterPro" id="IPR001640">
    <property type="entry name" value="Lgt"/>
</dbReference>
<dbReference type="NCBIfam" id="TIGR00544">
    <property type="entry name" value="lgt"/>
    <property type="match status" value="1"/>
</dbReference>
<dbReference type="PANTHER" id="PTHR30589:SF0">
    <property type="entry name" value="PHOSPHATIDYLGLYCEROL--PROLIPOPROTEIN DIACYLGLYCERYL TRANSFERASE"/>
    <property type="match status" value="1"/>
</dbReference>
<dbReference type="PANTHER" id="PTHR30589">
    <property type="entry name" value="PROLIPOPROTEIN DIACYLGLYCERYL TRANSFERASE"/>
    <property type="match status" value="1"/>
</dbReference>
<dbReference type="Pfam" id="PF01790">
    <property type="entry name" value="LGT"/>
    <property type="match status" value="1"/>
</dbReference>
<dbReference type="PROSITE" id="PS01311">
    <property type="entry name" value="LGT"/>
    <property type="match status" value="1"/>
</dbReference>
<protein>
    <recommendedName>
        <fullName evidence="1">Phosphatidylglycerol--prolipoprotein diacylglyceryl transferase</fullName>
        <ecNumber evidence="1">2.5.1.145</ecNumber>
    </recommendedName>
</protein>
<name>LGT_AZOBR</name>
<feature type="chain" id="PRO_0000172544" description="Phosphatidylglycerol--prolipoprotein diacylglyceryl transferase">
    <location>
        <begin position="1"/>
        <end position="268"/>
    </location>
</feature>
<feature type="transmembrane region" description="Helical" evidence="1">
    <location>
        <begin position="23"/>
        <end position="43"/>
    </location>
</feature>
<feature type="transmembrane region" description="Helical" evidence="1">
    <location>
        <begin position="58"/>
        <end position="78"/>
    </location>
</feature>
<feature type="transmembrane region" description="Helical" evidence="1">
    <location>
        <begin position="96"/>
        <end position="116"/>
    </location>
</feature>
<feature type="transmembrane region" description="Helical" evidence="1">
    <location>
        <begin position="119"/>
        <end position="139"/>
    </location>
</feature>
<feature type="transmembrane region" description="Helical" evidence="1">
    <location>
        <begin position="181"/>
        <end position="201"/>
    </location>
</feature>
<feature type="transmembrane region" description="Helical" evidence="1">
    <location>
        <begin position="206"/>
        <end position="226"/>
    </location>
</feature>
<feature type="transmembrane region" description="Helical" evidence="1">
    <location>
        <begin position="238"/>
        <end position="258"/>
    </location>
</feature>
<feature type="binding site" evidence="1">
    <location>
        <position position="141"/>
    </location>
    <ligand>
        <name>a 1,2-diacyl-sn-glycero-3-phospho-(1'-sn-glycerol)</name>
        <dbReference type="ChEBI" id="CHEBI:64716"/>
    </ligand>
</feature>
<keyword id="KW-0997">Cell inner membrane</keyword>
<keyword id="KW-1003">Cell membrane</keyword>
<keyword id="KW-0472">Membrane</keyword>
<keyword id="KW-0808">Transferase</keyword>
<keyword id="KW-0812">Transmembrane</keyword>
<keyword id="KW-1133">Transmembrane helix</keyword>
<evidence type="ECO:0000255" key="1">
    <source>
        <dbReference type="HAMAP-Rule" id="MF_01147"/>
    </source>
</evidence>
<accession>Q8KSV0</accession>
<comment type="function">
    <text evidence="1">Catalyzes the transfer of the diacylglyceryl group from phosphatidylglycerol to the sulfhydryl group of the N-terminal cysteine of a prolipoprotein, the first step in the formation of mature lipoproteins.</text>
</comment>
<comment type="catalytic activity">
    <reaction evidence="1">
        <text>L-cysteinyl-[prolipoprotein] + a 1,2-diacyl-sn-glycero-3-phospho-(1'-sn-glycerol) = an S-1,2-diacyl-sn-glyceryl-L-cysteinyl-[prolipoprotein] + sn-glycerol 1-phosphate + H(+)</text>
        <dbReference type="Rhea" id="RHEA:56712"/>
        <dbReference type="Rhea" id="RHEA-COMP:14679"/>
        <dbReference type="Rhea" id="RHEA-COMP:14680"/>
        <dbReference type="ChEBI" id="CHEBI:15378"/>
        <dbReference type="ChEBI" id="CHEBI:29950"/>
        <dbReference type="ChEBI" id="CHEBI:57685"/>
        <dbReference type="ChEBI" id="CHEBI:64716"/>
        <dbReference type="ChEBI" id="CHEBI:140658"/>
        <dbReference type="EC" id="2.5.1.145"/>
    </reaction>
</comment>
<comment type="pathway">
    <text evidence="1">Protein modification; lipoprotein biosynthesis (diacylglyceryl transfer).</text>
</comment>
<comment type="subcellular location">
    <subcellularLocation>
        <location evidence="1">Cell inner membrane</location>
        <topology evidence="1">Multi-pass membrane protein</topology>
    </subcellularLocation>
</comment>
<comment type="similarity">
    <text evidence="1">Belongs to the Lgt family.</text>
</comment>
<proteinExistence type="inferred from homology"/>